<name>HIS2_PROMP</name>
<keyword id="KW-0028">Amino-acid biosynthesis</keyword>
<keyword id="KW-0067">ATP-binding</keyword>
<keyword id="KW-0963">Cytoplasm</keyword>
<keyword id="KW-0368">Histidine biosynthesis</keyword>
<keyword id="KW-0378">Hydrolase</keyword>
<keyword id="KW-0511">Multifunctional enzyme</keyword>
<keyword id="KW-0547">Nucleotide-binding</keyword>
<proteinExistence type="inferred from homology"/>
<sequence>MAYSKNFSIEELRFDNKGLIPAIAQDWLDGSILMLAWMNKESLNKTLETRNVHYWSRSRSEIWRKGATSGSTQFLKEIRFDCDNDALVLSIEQNGSGACHTGEKSCFFNEIDSISMNKTAKKTSPFSNICSELFDTLHERSINPLEKSYTNHLLTKGSNTILKKIGEETAEFIMACKDNDKDEIANEASDIIYHLQVALIYKGVKWRDVLNVLESRRGKNN</sequence>
<dbReference type="EC" id="3.5.4.19" evidence="1"/>
<dbReference type="EC" id="3.6.1.31" evidence="1"/>
<dbReference type="EMBL" id="BX548174">
    <property type="protein sequence ID" value="CAE19037.1"/>
    <property type="molecule type" value="Genomic_DNA"/>
</dbReference>
<dbReference type="RefSeq" id="WP_011132212.1">
    <property type="nucleotide sequence ID" value="NC_005072.1"/>
</dbReference>
<dbReference type="SMR" id="Q7TUC7"/>
<dbReference type="STRING" id="59919.PMM0578"/>
<dbReference type="KEGG" id="pmm:PMM0578"/>
<dbReference type="eggNOG" id="COG0139">
    <property type="taxonomic scope" value="Bacteria"/>
</dbReference>
<dbReference type="eggNOG" id="COG0140">
    <property type="taxonomic scope" value="Bacteria"/>
</dbReference>
<dbReference type="HOGENOM" id="CLU_048577_3_1_3"/>
<dbReference type="OrthoDB" id="9795769at2"/>
<dbReference type="UniPathway" id="UPA00031">
    <property type="reaction ID" value="UER00007"/>
</dbReference>
<dbReference type="UniPathway" id="UPA00031">
    <property type="reaction ID" value="UER00008"/>
</dbReference>
<dbReference type="Proteomes" id="UP000001026">
    <property type="component" value="Chromosome"/>
</dbReference>
<dbReference type="GO" id="GO:0005737">
    <property type="term" value="C:cytoplasm"/>
    <property type="evidence" value="ECO:0007669"/>
    <property type="project" value="UniProtKB-SubCell"/>
</dbReference>
<dbReference type="GO" id="GO:0005524">
    <property type="term" value="F:ATP binding"/>
    <property type="evidence" value="ECO:0007669"/>
    <property type="project" value="UniProtKB-KW"/>
</dbReference>
<dbReference type="GO" id="GO:0004635">
    <property type="term" value="F:phosphoribosyl-AMP cyclohydrolase activity"/>
    <property type="evidence" value="ECO:0007669"/>
    <property type="project" value="UniProtKB-UniRule"/>
</dbReference>
<dbReference type="GO" id="GO:0004636">
    <property type="term" value="F:phosphoribosyl-ATP diphosphatase activity"/>
    <property type="evidence" value="ECO:0007669"/>
    <property type="project" value="UniProtKB-UniRule"/>
</dbReference>
<dbReference type="GO" id="GO:0000105">
    <property type="term" value="P:L-histidine biosynthetic process"/>
    <property type="evidence" value="ECO:0007669"/>
    <property type="project" value="UniProtKB-UniRule"/>
</dbReference>
<dbReference type="CDD" id="cd11534">
    <property type="entry name" value="NTP-PPase_HisIE_like"/>
    <property type="match status" value="1"/>
</dbReference>
<dbReference type="FunFam" id="3.10.20.810:FF:000001">
    <property type="entry name" value="Histidine biosynthesis bifunctional protein HisIE"/>
    <property type="match status" value="1"/>
</dbReference>
<dbReference type="Gene3D" id="1.10.287.1080">
    <property type="entry name" value="MazG-like"/>
    <property type="match status" value="1"/>
</dbReference>
<dbReference type="Gene3D" id="3.10.20.810">
    <property type="entry name" value="Phosphoribosyl-AMP cyclohydrolase"/>
    <property type="match status" value="1"/>
</dbReference>
<dbReference type="HAMAP" id="MF_01020">
    <property type="entry name" value="HisE"/>
    <property type="match status" value="1"/>
</dbReference>
<dbReference type="HAMAP" id="MF_01021">
    <property type="entry name" value="HisI"/>
    <property type="match status" value="1"/>
</dbReference>
<dbReference type="HAMAP" id="MF_01019">
    <property type="entry name" value="HisIE"/>
    <property type="match status" value="1"/>
</dbReference>
<dbReference type="InterPro" id="IPR023019">
    <property type="entry name" value="His_synth_HisIE"/>
</dbReference>
<dbReference type="InterPro" id="IPR008179">
    <property type="entry name" value="HisE"/>
</dbReference>
<dbReference type="InterPro" id="IPR026660">
    <property type="entry name" value="PRA-CH"/>
</dbReference>
<dbReference type="InterPro" id="IPR021130">
    <property type="entry name" value="PRib-ATP_PPHydrolase-like"/>
</dbReference>
<dbReference type="InterPro" id="IPR002496">
    <property type="entry name" value="PRib_AMP_CycHydrolase_dom"/>
</dbReference>
<dbReference type="InterPro" id="IPR038019">
    <property type="entry name" value="PRib_AMP_CycHydrolase_sf"/>
</dbReference>
<dbReference type="NCBIfam" id="TIGR03188">
    <property type="entry name" value="histidine_hisI"/>
    <property type="match status" value="1"/>
</dbReference>
<dbReference type="NCBIfam" id="NF000768">
    <property type="entry name" value="PRK00051.1"/>
    <property type="match status" value="1"/>
</dbReference>
<dbReference type="NCBIfam" id="NF002747">
    <property type="entry name" value="PRK02759.1"/>
    <property type="match status" value="1"/>
</dbReference>
<dbReference type="PANTHER" id="PTHR42945">
    <property type="entry name" value="HISTIDINE BIOSYNTHESIS BIFUNCTIONAL PROTEIN"/>
    <property type="match status" value="1"/>
</dbReference>
<dbReference type="PANTHER" id="PTHR42945:SF1">
    <property type="entry name" value="HISTIDINE BIOSYNTHESIS BIFUNCTIONAL PROTEIN HIS7"/>
    <property type="match status" value="1"/>
</dbReference>
<dbReference type="Pfam" id="PF01502">
    <property type="entry name" value="PRA-CH"/>
    <property type="match status" value="1"/>
</dbReference>
<dbReference type="Pfam" id="PF01503">
    <property type="entry name" value="PRA-PH"/>
    <property type="match status" value="1"/>
</dbReference>
<dbReference type="SUPFAM" id="SSF101386">
    <property type="entry name" value="all-alpha NTP pyrophosphatases"/>
    <property type="match status" value="1"/>
</dbReference>
<dbReference type="SUPFAM" id="SSF141734">
    <property type="entry name" value="HisI-like"/>
    <property type="match status" value="1"/>
</dbReference>
<feature type="chain" id="PRO_0000136425" description="Histidine biosynthesis bifunctional protein HisIE">
    <location>
        <begin position="1"/>
        <end position="221"/>
    </location>
</feature>
<feature type="region of interest" description="Phosphoribosyl-AMP cyclohydrolase">
    <location>
        <begin position="1"/>
        <end position="129"/>
    </location>
</feature>
<feature type="region of interest" description="Phosphoribosyl-ATP pyrophosphohydrolase">
    <location>
        <begin position="130"/>
        <end position="221"/>
    </location>
</feature>
<protein>
    <recommendedName>
        <fullName evidence="1">Histidine biosynthesis bifunctional protein HisIE</fullName>
    </recommendedName>
    <domain>
        <recommendedName>
            <fullName evidence="1">Phosphoribosyl-AMP cyclohydrolase</fullName>
            <shortName evidence="1">PRA-CH</shortName>
            <ecNumber evidence="1">3.5.4.19</ecNumber>
        </recommendedName>
    </domain>
    <domain>
        <recommendedName>
            <fullName evidence="1">Phosphoribosyl-ATP pyrophosphatase</fullName>
            <shortName evidence="1">PRA-PH</shortName>
            <ecNumber evidence="1">3.6.1.31</ecNumber>
        </recommendedName>
    </domain>
</protein>
<gene>
    <name evidence="1" type="primary">hisI</name>
    <name evidence="1" type="synonym">hisIE</name>
    <name type="ordered locus">PMM0578</name>
</gene>
<reference key="1">
    <citation type="journal article" date="2003" name="Nature">
        <title>Genome divergence in two Prochlorococcus ecotypes reflects oceanic niche differentiation.</title>
        <authorList>
            <person name="Rocap G."/>
            <person name="Larimer F.W."/>
            <person name="Lamerdin J.E."/>
            <person name="Malfatti S."/>
            <person name="Chain P."/>
            <person name="Ahlgren N.A."/>
            <person name="Arellano A."/>
            <person name="Coleman M."/>
            <person name="Hauser L."/>
            <person name="Hess W.R."/>
            <person name="Johnson Z.I."/>
            <person name="Land M.L."/>
            <person name="Lindell D."/>
            <person name="Post A.F."/>
            <person name="Regala W."/>
            <person name="Shah M."/>
            <person name="Shaw S.L."/>
            <person name="Steglich C."/>
            <person name="Sullivan M.B."/>
            <person name="Ting C.S."/>
            <person name="Tolonen A."/>
            <person name="Webb E.A."/>
            <person name="Zinser E.R."/>
            <person name="Chisholm S.W."/>
        </authorList>
    </citation>
    <scope>NUCLEOTIDE SEQUENCE [LARGE SCALE GENOMIC DNA]</scope>
    <source>
        <strain>CCMP1986 / NIES-2087 / MED4</strain>
    </source>
</reference>
<accession>Q7TUC7</accession>
<organism>
    <name type="scientific">Prochlorococcus marinus subsp. pastoris (strain CCMP1986 / NIES-2087 / MED4)</name>
    <dbReference type="NCBI Taxonomy" id="59919"/>
    <lineage>
        <taxon>Bacteria</taxon>
        <taxon>Bacillati</taxon>
        <taxon>Cyanobacteriota</taxon>
        <taxon>Cyanophyceae</taxon>
        <taxon>Synechococcales</taxon>
        <taxon>Prochlorococcaceae</taxon>
        <taxon>Prochlorococcus</taxon>
    </lineage>
</organism>
<comment type="catalytic activity">
    <reaction evidence="1">
        <text>1-(5-phospho-beta-D-ribosyl)-ATP + H2O = 1-(5-phospho-beta-D-ribosyl)-5'-AMP + diphosphate + H(+)</text>
        <dbReference type="Rhea" id="RHEA:22828"/>
        <dbReference type="ChEBI" id="CHEBI:15377"/>
        <dbReference type="ChEBI" id="CHEBI:15378"/>
        <dbReference type="ChEBI" id="CHEBI:33019"/>
        <dbReference type="ChEBI" id="CHEBI:59457"/>
        <dbReference type="ChEBI" id="CHEBI:73183"/>
        <dbReference type="EC" id="3.6.1.31"/>
    </reaction>
</comment>
<comment type="catalytic activity">
    <reaction evidence="1">
        <text>1-(5-phospho-beta-D-ribosyl)-5'-AMP + H2O = 1-(5-phospho-beta-D-ribosyl)-5-[(5-phospho-beta-D-ribosylamino)methylideneamino]imidazole-4-carboxamide</text>
        <dbReference type="Rhea" id="RHEA:20049"/>
        <dbReference type="ChEBI" id="CHEBI:15377"/>
        <dbReference type="ChEBI" id="CHEBI:58435"/>
        <dbReference type="ChEBI" id="CHEBI:59457"/>
        <dbReference type="EC" id="3.5.4.19"/>
    </reaction>
</comment>
<comment type="pathway">
    <text evidence="1">Amino-acid biosynthesis; L-histidine biosynthesis; L-histidine from 5-phospho-alpha-D-ribose 1-diphosphate: step 2/9.</text>
</comment>
<comment type="pathway">
    <text evidence="1">Amino-acid biosynthesis; L-histidine biosynthesis; L-histidine from 5-phospho-alpha-D-ribose 1-diphosphate: step 3/9.</text>
</comment>
<comment type="subcellular location">
    <subcellularLocation>
        <location evidence="1">Cytoplasm</location>
    </subcellularLocation>
</comment>
<comment type="similarity">
    <text evidence="1">In the N-terminal section; belongs to the PRA-CH family.</text>
</comment>
<comment type="similarity">
    <text evidence="1">In the C-terminal section; belongs to the PRA-PH family.</text>
</comment>
<evidence type="ECO:0000255" key="1">
    <source>
        <dbReference type="HAMAP-Rule" id="MF_01019"/>
    </source>
</evidence>